<protein>
    <recommendedName>
        <fullName evidence="1">ATP synthase subunit beta</fullName>
        <ecNumber evidence="1">7.1.2.2</ecNumber>
    </recommendedName>
    <alternativeName>
        <fullName evidence="1">ATP synthase F1 sector subunit beta</fullName>
    </alternativeName>
    <alternativeName>
        <fullName evidence="1">F-ATPase subunit beta</fullName>
    </alternativeName>
</protein>
<accession>Q8P1K5</accession>
<reference key="1">
    <citation type="journal article" date="2002" name="Proc. Natl. Acad. Sci. U.S.A.">
        <title>Genome sequence and comparative microarray analysis of serotype M18 group A Streptococcus strains associated with acute rheumatic fever outbreaks.</title>
        <authorList>
            <person name="Smoot J.C."/>
            <person name="Barbian K.D."/>
            <person name="Van Gompel J.J."/>
            <person name="Smoot L.M."/>
            <person name="Chaussee M.S."/>
            <person name="Sylva G.L."/>
            <person name="Sturdevant D.E."/>
            <person name="Ricklefs S.M."/>
            <person name="Porcella S.F."/>
            <person name="Parkins L.D."/>
            <person name="Beres S.B."/>
            <person name="Campbell D.S."/>
            <person name="Smith T.M."/>
            <person name="Zhang Q."/>
            <person name="Kapur V."/>
            <person name="Daly J.A."/>
            <person name="Veasy L.G."/>
            <person name="Musser J.M."/>
        </authorList>
    </citation>
    <scope>NUCLEOTIDE SEQUENCE [LARGE SCALE GENOMIC DNA]</scope>
    <source>
        <strain>MGAS8232</strain>
    </source>
</reference>
<gene>
    <name evidence="1" type="primary">atpD</name>
    <name type="ordered locus">spyM18_0818</name>
</gene>
<evidence type="ECO:0000255" key="1">
    <source>
        <dbReference type="HAMAP-Rule" id="MF_01347"/>
    </source>
</evidence>
<proteinExistence type="inferred from homology"/>
<feature type="chain" id="PRO_0000254394" description="ATP synthase subunit beta">
    <location>
        <begin position="1"/>
        <end position="468"/>
    </location>
</feature>
<feature type="binding site" evidence="1">
    <location>
        <begin position="155"/>
        <end position="162"/>
    </location>
    <ligand>
        <name>ATP</name>
        <dbReference type="ChEBI" id="CHEBI:30616"/>
    </ligand>
</feature>
<keyword id="KW-0066">ATP synthesis</keyword>
<keyword id="KW-0067">ATP-binding</keyword>
<keyword id="KW-1003">Cell membrane</keyword>
<keyword id="KW-0139">CF(1)</keyword>
<keyword id="KW-0375">Hydrogen ion transport</keyword>
<keyword id="KW-0406">Ion transport</keyword>
<keyword id="KW-0472">Membrane</keyword>
<keyword id="KW-0547">Nucleotide-binding</keyword>
<keyword id="KW-1278">Translocase</keyword>
<keyword id="KW-0813">Transport</keyword>
<name>ATPB_STRP8</name>
<organism>
    <name type="scientific">Streptococcus pyogenes serotype M18 (strain MGAS8232)</name>
    <dbReference type="NCBI Taxonomy" id="186103"/>
    <lineage>
        <taxon>Bacteria</taxon>
        <taxon>Bacillati</taxon>
        <taxon>Bacillota</taxon>
        <taxon>Bacilli</taxon>
        <taxon>Lactobacillales</taxon>
        <taxon>Streptococcaceae</taxon>
        <taxon>Streptococcus</taxon>
    </lineage>
</organism>
<dbReference type="EC" id="7.1.2.2" evidence="1"/>
<dbReference type="EMBL" id="AE009949">
    <property type="protein sequence ID" value="AAL97482.1"/>
    <property type="molecule type" value="Genomic_DNA"/>
</dbReference>
<dbReference type="RefSeq" id="WP_011017611.1">
    <property type="nucleotide sequence ID" value="NC_003485.1"/>
</dbReference>
<dbReference type="SMR" id="Q8P1K5"/>
<dbReference type="KEGG" id="spm:spyM18_0818"/>
<dbReference type="HOGENOM" id="CLU_022398_0_2_9"/>
<dbReference type="GO" id="GO:0005886">
    <property type="term" value="C:plasma membrane"/>
    <property type="evidence" value="ECO:0007669"/>
    <property type="project" value="UniProtKB-SubCell"/>
</dbReference>
<dbReference type="GO" id="GO:0045259">
    <property type="term" value="C:proton-transporting ATP synthase complex"/>
    <property type="evidence" value="ECO:0007669"/>
    <property type="project" value="UniProtKB-KW"/>
</dbReference>
<dbReference type="GO" id="GO:0005524">
    <property type="term" value="F:ATP binding"/>
    <property type="evidence" value="ECO:0007669"/>
    <property type="project" value="UniProtKB-UniRule"/>
</dbReference>
<dbReference type="GO" id="GO:0016887">
    <property type="term" value="F:ATP hydrolysis activity"/>
    <property type="evidence" value="ECO:0007669"/>
    <property type="project" value="InterPro"/>
</dbReference>
<dbReference type="GO" id="GO:0046933">
    <property type="term" value="F:proton-transporting ATP synthase activity, rotational mechanism"/>
    <property type="evidence" value="ECO:0007669"/>
    <property type="project" value="UniProtKB-UniRule"/>
</dbReference>
<dbReference type="CDD" id="cd18110">
    <property type="entry name" value="ATP-synt_F1_beta_C"/>
    <property type="match status" value="1"/>
</dbReference>
<dbReference type="CDD" id="cd18115">
    <property type="entry name" value="ATP-synt_F1_beta_N"/>
    <property type="match status" value="1"/>
</dbReference>
<dbReference type="CDD" id="cd01133">
    <property type="entry name" value="F1-ATPase_beta_CD"/>
    <property type="match status" value="1"/>
</dbReference>
<dbReference type="FunFam" id="1.10.1140.10:FF:000001">
    <property type="entry name" value="ATP synthase subunit beta"/>
    <property type="match status" value="1"/>
</dbReference>
<dbReference type="FunFam" id="2.40.10.170:FF:000005">
    <property type="entry name" value="ATP synthase subunit beta"/>
    <property type="match status" value="1"/>
</dbReference>
<dbReference type="FunFam" id="3.40.50.300:FF:000004">
    <property type="entry name" value="ATP synthase subunit beta"/>
    <property type="match status" value="1"/>
</dbReference>
<dbReference type="Gene3D" id="2.40.10.170">
    <property type="match status" value="1"/>
</dbReference>
<dbReference type="Gene3D" id="1.10.1140.10">
    <property type="entry name" value="Bovine Mitochondrial F1-atpase, Atp Synthase Beta Chain, Chain D, domain 3"/>
    <property type="match status" value="1"/>
</dbReference>
<dbReference type="Gene3D" id="3.40.50.300">
    <property type="entry name" value="P-loop containing nucleotide triphosphate hydrolases"/>
    <property type="match status" value="1"/>
</dbReference>
<dbReference type="HAMAP" id="MF_01347">
    <property type="entry name" value="ATP_synth_beta_bact"/>
    <property type="match status" value="1"/>
</dbReference>
<dbReference type="InterPro" id="IPR003593">
    <property type="entry name" value="AAA+_ATPase"/>
</dbReference>
<dbReference type="InterPro" id="IPR055190">
    <property type="entry name" value="ATP-synt_VA_C"/>
</dbReference>
<dbReference type="InterPro" id="IPR005722">
    <property type="entry name" value="ATP_synth_F1_bsu"/>
</dbReference>
<dbReference type="InterPro" id="IPR020003">
    <property type="entry name" value="ATPase_a/bsu_AS"/>
</dbReference>
<dbReference type="InterPro" id="IPR050053">
    <property type="entry name" value="ATPase_alpha/beta_chains"/>
</dbReference>
<dbReference type="InterPro" id="IPR004100">
    <property type="entry name" value="ATPase_F1/V1/A1_a/bsu_N"/>
</dbReference>
<dbReference type="InterPro" id="IPR036121">
    <property type="entry name" value="ATPase_F1/V1/A1_a/bsu_N_sf"/>
</dbReference>
<dbReference type="InterPro" id="IPR000194">
    <property type="entry name" value="ATPase_F1/V1/A1_a/bsu_nucl-bd"/>
</dbReference>
<dbReference type="InterPro" id="IPR024034">
    <property type="entry name" value="ATPase_F1/V1_b/a_C"/>
</dbReference>
<dbReference type="InterPro" id="IPR027417">
    <property type="entry name" value="P-loop_NTPase"/>
</dbReference>
<dbReference type="NCBIfam" id="TIGR01039">
    <property type="entry name" value="atpD"/>
    <property type="match status" value="1"/>
</dbReference>
<dbReference type="PANTHER" id="PTHR15184">
    <property type="entry name" value="ATP SYNTHASE"/>
    <property type="match status" value="1"/>
</dbReference>
<dbReference type="PANTHER" id="PTHR15184:SF71">
    <property type="entry name" value="ATP SYNTHASE SUBUNIT BETA, MITOCHONDRIAL"/>
    <property type="match status" value="1"/>
</dbReference>
<dbReference type="Pfam" id="PF00006">
    <property type="entry name" value="ATP-synt_ab"/>
    <property type="match status" value="1"/>
</dbReference>
<dbReference type="Pfam" id="PF02874">
    <property type="entry name" value="ATP-synt_ab_N"/>
    <property type="match status" value="1"/>
</dbReference>
<dbReference type="Pfam" id="PF22919">
    <property type="entry name" value="ATP-synt_VA_C"/>
    <property type="match status" value="1"/>
</dbReference>
<dbReference type="SMART" id="SM00382">
    <property type="entry name" value="AAA"/>
    <property type="match status" value="1"/>
</dbReference>
<dbReference type="SUPFAM" id="SSF47917">
    <property type="entry name" value="C-terminal domain of alpha and beta subunits of F1 ATP synthase"/>
    <property type="match status" value="1"/>
</dbReference>
<dbReference type="SUPFAM" id="SSF50615">
    <property type="entry name" value="N-terminal domain of alpha and beta subunits of F1 ATP synthase"/>
    <property type="match status" value="1"/>
</dbReference>
<dbReference type="SUPFAM" id="SSF52540">
    <property type="entry name" value="P-loop containing nucleoside triphosphate hydrolases"/>
    <property type="match status" value="1"/>
</dbReference>
<dbReference type="PROSITE" id="PS00152">
    <property type="entry name" value="ATPASE_ALPHA_BETA"/>
    <property type="match status" value="1"/>
</dbReference>
<sequence length="468" mass="51077">MSSGKIAQVVGPVVDVMFASGDKLPEINNALIVYKDSDKKQKIVLEVALELGDGMVRTIAMESTDGLTRGLEVLDTGRAISVPVGKETLGRVFNVLGETIDLEEPFAEDVDRQPIHKKAPSFDELSTSSEILETGIKVIDLLAPYLKGGKVGLFGGAGVGKTVLIQELIHNIAQEHGGISVFTGVGERTREGNDLYWEMKESGVIEKTAMVFGQMNEPPGARMRVALTGLTIAEYFRDVEGQDVLLFIDNIFRFTQAGSEVSALLGRMPSAVGYQPTLATEMGQLQERITSTQKGSVTSIQAIYVPADDYTDPAPATAFAHLDSTTNLERKLTQMGIYPAVDPLASSSRALSPEIVGEEHYAVATEVQRVLQRYRELQDIIAILGMDELSDEEKTLVGRARRIQFFLSQNFNVAEQFTGLPGSYVPVAETVRGFKEILEGKYDHLPEDAFRSVGPIEDVIKKAEKMGF</sequence>
<comment type="function">
    <text evidence="1">Produces ATP from ADP in the presence of a proton gradient across the membrane. The catalytic sites are hosted primarily by the beta subunits.</text>
</comment>
<comment type="catalytic activity">
    <reaction evidence="1">
        <text>ATP + H2O + 4 H(+)(in) = ADP + phosphate + 5 H(+)(out)</text>
        <dbReference type="Rhea" id="RHEA:57720"/>
        <dbReference type="ChEBI" id="CHEBI:15377"/>
        <dbReference type="ChEBI" id="CHEBI:15378"/>
        <dbReference type="ChEBI" id="CHEBI:30616"/>
        <dbReference type="ChEBI" id="CHEBI:43474"/>
        <dbReference type="ChEBI" id="CHEBI:456216"/>
        <dbReference type="EC" id="7.1.2.2"/>
    </reaction>
</comment>
<comment type="subunit">
    <text evidence="1">F-type ATPases have 2 components, CF(1) - the catalytic core - and CF(0) - the membrane proton channel. CF(1) has five subunits: alpha(3), beta(3), gamma(1), delta(1), epsilon(1). CF(0) has three main subunits: a(1), b(2) and c(9-12). The alpha and beta chains form an alternating ring which encloses part of the gamma chain. CF(1) is attached to CF(0) by a central stalk formed by the gamma and epsilon chains, while a peripheral stalk is formed by the delta and b chains.</text>
</comment>
<comment type="subcellular location">
    <subcellularLocation>
        <location evidence="1">Cell membrane</location>
        <topology evidence="1">Peripheral membrane protein</topology>
    </subcellularLocation>
</comment>
<comment type="similarity">
    <text evidence="1">Belongs to the ATPase alpha/beta chains family.</text>
</comment>